<organism>
    <name type="scientific">Escherichia coli</name>
    <dbReference type="NCBI Taxonomy" id="562"/>
    <lineage>
        <taxon>Bacteria</taxon>
        <taxon>Pseudomonadati</taxon>
        <taxon>Pseudomonadota</taxon>
        <taxon>Gammaproteobacteria</taxon>
        <taxon>Enterobacterales</taxon>
        <taxon>Enterobacteriaceae</taxon>
        <taxon>Escherichia</taxon>
    </lineage>
</organism>
<sequence length="295" mass="33985">MVLPDIKKGKDMINILPFEIISRNTKTLLITYISSVDITHEGMKKVLESLRSKQGIISEYLLDKLLDESLIDKDKGKEFLITTGVINKTKTSPLWVNSVIISDVPHLFSNAREQWKCDGVFVSHIIDIKDNNINVSDSTLIWLHLENYHSDIVKRIYSKFESNPGVAFIQSYYLKESFRIDGVYSPDLGTPCHFCHIERWLSREEKSFRRNEMSWANLLQLLKKYQMTLPALALGESERGFSYHLIKRRLQELTGTSLVKSHVDNFMSSVSADLITCILCKEPVIHWQACSCLER</sequence>
<keyword id="KW-0002">3D-structure</keyword>
<keyword id="KW-0045">Antibiotic biosynthesis</keyword>
<keyword id="KW-0963">Cytoplasm</keyword>
<keyword id="KW-0614">Plasmid</keyword>
<proteinExistence type="evidence at protein level"/>
<feature type="chain" id="PRO_0000068571" description="Microcin B17-processing protein McbB">
    <location>
        <begin position="1"/>
        <end position="295"/>
    </location>
</feature>
<feature type="strand" evidence="2">
    <location>
        <begin position="13"/>
        <end position="15"/>
    </location>
</feature>
<feature type="strand" evidence="2">
    <location>
        <begin position="17"/>
        <end position="23"/>
    </location>
</feature>
<feature type="strand" evidence="2">
    <location>
        <begin position="26"/>
        <end position="38"/>
    </location>
</feature>
<feature type="helix" evidence="2">
    <location>
        <begin position="41"/>
        <end position="52"/>
    </location>
</feature>
<feature type="strand" evidence="2">
    <location>
        <begin position="55"/>
        <end position="57"/>
    </location>
</feature>
<feature type="helix" evidence="2">
    <location>
        <begin position="59"/>
        <end position="68"/>
    </location>
</feature>
<feature type="helix" evidence="2">
    <location>
        <begin position="73"/>
        <end position="82"/>
    </location>
</feature>
<feature type="strand" evidence="2">
    <location>
        <begin position="85"/>
        <end position="88"/>
    </location>
</feature>
<feature type="strand" evidence="2">
    <location>
        <begin position="96"/>
        <end position="103"/>
    </location>
</feature>
<feature type="helix" evidence="2">
    <location>
        <begin position="105"/>
        <end position="108"/>
    </location>
</feature>
<feature type="helix" evidence="2">
    <location>
        <begin position="111"/>
        <end position="115"/>
    </location>
</feature>
<feature type="helix" evidence="2">
    <location>
        <begin position="116"/>
        <end position="118"/>
    </location>
</feature>
<feature type="strand" evidence="2">
    <location>
        <begin position="122"/>
        <end position="127"/>
    </location>
</feature>
<feature type="strand" evidence="2">
    <location>
        <begin position="139"/>
        <end position="144"/>
    </location>
</feature>
<feature type="helix" evidence="2">
    <location>
        <begin position="150"/>
        <end position="160"/>
    </location>
</feature>
<feature type="strand" evidence="2">
    <location>
        <begin position="167"/>
        <end position="175"/>
    </location>
</feature>
<feature type="strand" evidence="2">
    <location>
        <begin position="177"/>
        <end position="180"/>
    </location>
</feature>
<feature type="turn" evidence="2">
    <location>
        <begin position="186"/>
        <end position="189"/>
    </location>
</feature>
<feature type="helix" evidence="2">
    <location>
        <begin position="193"/>
        <end position="204"/>
    </location>
</feature>
<feature type="strand" evidence="2">
    <location>
        <begin position="205"/>
        <end position="208"/>
    </location>
</feature>
<feature type="helix" evidence="2">
    <location>
        <begin position="215"/>
        <end position="220"/>
    </location>
</feature>
<feature type="helix" evidence="2">
    <location>
        <begin position="236"/>
        <end position="254"/>
    </location>
</feature>
<feature type="turn" evidence="2">
    <location>
        <begin position="263"/>
        <end position="267"/>
    </location>
</feature>
<feature type="strand" evidence="2">
    <location>
        <begin position="268"/>
        <end position="273"/>
    </location>
</feature>
<feature type="turn" evidence="2">
    <location>
        <begin position="274"/>
        <end position="276"/>
    </location>
</feature>
<feature type="strand" evidence="2">
    <location>
        <begin position="279"/>
        <end position="282"/>
    </location>
</feature>
<feature type="helix" evidence="2">
    <location>
        <begin position="292"/>
        <end position="294"/>
    </location>
</feature>
<dbReference type="EMBL" id="M24253">
    <property type="protein sequence ID" value="AAA72742.1"/>
    <property type="molecule type" value="Genomic_DNA"/>
</dbReference>
<dbReference type="PIR" id="B32058">
    <property type="entry name" value="B32058"/>
</dbReference>
<dbReference type="PDB" id="6GOS">
    <property type="method" value="X-ray"/>
    <property type="resolution" value="2.10 A"/>
    <property type="chains" value="1/2=1-295"/>
</dbReference>
<dbReference type="PDB" id="6GRG">
    <property type="method" value="X-ray"/>
    <property type="resolution" value="2.35 A"/>
    <property type="chains" value="1/2=1-295"/>
</dbReference>
<dbReference type="PDB" id="6GRH">
    <property type="method" value="X-ray"/>
    <property type="resolution" value="1.85 A"/>
    <property type="chains" value="1/2=1-295"/>
</dbReference>
<dbReference type="PDB" id="6GRI">
    <property type="method" value="X-ray"/>
    <property type="resolution" value="2.70 A"/>
    <property type="chains" value="1/2=1-295"/>
</dbReference>
<dbReference type="PDBsum" id="6GOS"/>
<dbReference type="PDBsum" id="6GRG"/>
<dbReference type="PDBsum" id="6GRH"/>
<dbReference type="PDBsum" id="6GRI"/>
<dbReference type="SMR" id="P23184"/>
<dbReference type="BioCyc" id="MetaCyc:MONOMER-21086"/>
<dbReference type="BRENDA" id="1.3.3.16">
    <property type="organism ID" value="2026"/>
</dbReference>
<dbReference type="GO" id="GO:0005737">
    <property type="term" value="C:cytoplasm"/>
    <property type="evidence" value="ECO:0007669"/>
    <property type="project" value="UniProtKB-SubCell"/>
</dbReference>
<dbReference type="GO" id="GO:0017000">
    <property type="term" value="P:antibiotic biosynthetic process"/>
    <property type="evidence" value="ECO:0007669"/>
    <property type="project" value="UniProtKB-KW"/>
</dbReference>
<dbReference type="InterPro" id="IPR030956">
    <property type="entry name" value="McbB"/>
</dbReference>
<dbReference type="NCBIfam" id="TIGR04424">
    <property type="entry name" value="metallo_McbB"/>
    <property type="match status" value="1"/>
</dbReference>
<reference key="1">
    <citation type="journal article" date="1989" name="J. Bacteriol.">
        <title>DNA sequence, products, and transcriptional pattern of the genes involved in production of the DNA replication inhibitor microcin B17.</title>
        <authorList>
            <person name="Genilloud O."/>
            <person name="Moreno F."/>
            <person name="Kolter R."/>
        </authorList>
    </citation>
    <scope>NUCLEOTIDE SEQUENCE [GENOMIC DNA]</scope>
</reference>
<geneLocation type="plasmid">
    <name>IncFII pMccB17</name>
</geneLocation>
<accession>P23184</accession>
<gene>
    <name type="primary">mcbB</name>
</gene>
<evidence type="ECO:0000305" key="1"/>
<evidence type="ECO:0007829" key="2">
    <source>
        <dbReference type="PDB" id="6GRH"/>
    </source>
</evidence>
<comment type="function">
    <text>Necessary to process the inactive microcin B17 (McbA) precursor into the active peptide.</text>
</comment>
<comment type="subcellular location">
    <subcellularLocation>
        <location evidence="1">Cytoplasm</location>
    </subcellularLocation>
</comment>
<name>MCBB_ECOLX</name>
<protein>
    <recommendedName>
        <fullName>Microcin B17-processing protein McbB</fullName>
    </recommendedName>
</protein>